<reference key="1">
    <citation type="journal article" date="2004" name="PLoS Biol.">
        <title>Phylogenomics of the reproductive parasite Wolbachia pipientis wMel: a streamlined genome overrun by mobile genetic elements.</title>
        <authorList>
            <person name="Wu M."/>
            <person name="Sun L.V."/>
            <person name="Vamathevan J.J."/>
            <person name="Riegler M."/>
            <person name="DeBoy R.T."/>
            <person name="Brownlie J.C."/>
            <person name="McGraw E.A."/>
            <person name="Martin W."/>
            <person name="Esser C."/>
            <person name="Ahmadinejad N."/>
            <person name="Wiegand C."/>
            <person name="Madupu R."/>
            <person name="Beanan M.J."/>
            <person name="Brinkac L.M."/>
            <person name="Daugherty S.C."/>
            <person name="Durkin A.S."/>
            <person name="Kolonay J.F."/>
            <person name="Nelson W.C."/>
            <person name="Mohamoud Y."/>
            <person name="Lee P."/>
            <person name="Berry K.J."/>
            <person name="Young M.B."/>
            <person name="Utterback T.R."/>
            <person name="Weidman J.F."/>
            <person name="Nierman W.C."/>
            <person name="Paulsen I.T."/>
            <person name="Nelson K.E."/>
            <person name="Tettelin H."/>
            <person name="O'Neill S.L."/>
            <person name="Eisen J.A."/>
        </authorList>
    </citation>
    <scope>NUCLEOTIDE SEQUENCE [LARGE SCALE GENOMIC DNA]</scope>
</reference>
<name>RL15_WOLPM</name>
<evidence type="ECO:0000255" key="1">
    <source>
        <dbReference type="HAMAP-Rule" id="MF_01341"/>
    </source>
</evidence>
<evidence type="ECO:0000256" key="2">
    <source>
        <dbReference type="SAM" id="MobiDB-lite"/>
    </source>
</evidence>
<evidence type="ECO:0000305" key="3"/>
<accession>Q73HA4</accession>
<keyword id="KW-0687">Ribonucleoprotein</keyword>
<keyword id="KW-0689">Ribosomal protein</keyword>
<keyword id="KW-0694">RNA-binding</keyword>
<keyword id="KW-0699">rRNA-binding</keyword>
<protein>
    <recommendedName>
        <fullName evidence="1">Large ribosomal subunit protein uL15</fullName>
    </recommendedName>
    <alternativeName>
        <fullName evidence="3">50S ribosomal protein L15</fullName>
    </alternativeName>
</protein>
<comment type="function">
    <text evidence="1">Binds to the 23S rRNA.</text>
</comment>
<comment type="subunit">
    <text evidence="1">Part of the 50S ribosomal subunit.</text>
</comment>
<comment type="similarity">
    <text evidence="1">Belongs to the universal ribosomal protein uL15 family.</text>
</comment>
<feature type="chain" id="PRO_0000251584" description="Large ribosomal subunit protein uL15">
    <location>
        <begin position="1"/>
        <end position="156"/>
    </location>
</feature>
<feature type="region of interest" description="Disordered" evidence="2">
    <location>
        <begin position="25"/>
        <end position="48"/>
    </location>
</feature>
<feature type="compositionally biased region" description="Basic residues" evidence="2">
    <location>
        <begin position="34"/>
        <end position="43"/>
    </location>
</feature>
<proteinExistence type="inferred from homology"/>
<organism>
    <name type="scientific">Wolbachia pipientis wMel</name>
    <dbReference type="NCBI Taxonomy" id="163164"/>
    <lineage>
        <taxon>Bacteria</taxon>
        <taxon>Pseudomonadati</taxon>
        <taxon>Pseudomonadota</taxon>
        <taxon>Alphaproteobacteria</taxon>
        <taxon>Rickettsiales</taxon>
        <taxon>Anaplasmataceae</taxon>
        <taxon>Wolbachieae</taxon>
        <taxon>Wolbachia</taxon>
    </lineage>
</organism>
<sequence length="156" mass="17150">MNNAVKLNSIFTKLSKKKKPKLLGRGIGCGKGKTSGRGHKGQKARSGVSINGFEGGQQSIYTRLPKRGFKPIRRSIYSIINVGDIQRLMEAKKIVKDSVIDKERLYKLGFIKSIKDKIKLLNKGKLSEKFVFHVDFASEAAKKSVASVGGSVEILS</sequence>
<dbReference type="EMBL" id="AE017196">
    <property type="protein sequence ID" value="AAS14361.1"/>
    <property type="molecule type" value="Genomic_DNA"/>
</dbReference>
<dbReference type="RefSeq" id="WP_006279863.1">
    <property type="nucleotide sequence ID" value="NZ_OX384529.1"/>
</dbReference>
<dbReference type="SMR" id="Q73HA4"/>
<dbReference type="EnsemblBacteria" id="AAS14361">
    <property type="protein sequence ID" value="AAS14361"/>
    <property type="gene ID" value="WD_0663"/>
</dbReference>
<dbReference type="GeneID" id="70036146"/>
<dbReference type="KEGG" id="wol:WD_0663"/>
<dbReference type="eggNOG" id="COG0200">
    <property type="taxonomic scope" value="Bacteria"/>
</dbReference>
<dbReference type="Proteomes" id="UP000008215">
    <property type="component" value="Chromosome"/>
</dbReference>
<dbReference type="GO" id="GO:0022625">
    <property type="term" value="C:cytosolic large ribosomal subunit"/>
    <property type="evidence" value="ECO:0007669"/>
    <property type="project" value="TreeGrafter"/>
</dbReference>
<dbReference type="GO" id="GO:0019843">
    <property type="term" value="F:rRNA binding"/>
    <property type="evidence" value="ECO:0007669"/>
    <property type="project" value="UniProtKB-UniRule"/>
</dbReference>
<dbReference type="GO" id="GO:0003735">
    <property type="term" value="F:structural constituent of ribosome"/>
    <property type="evidence" value="ECO:0007669"/>
    <property type="project" value="InterPro"/>
</dbReference>
<dbReference type="GO" id="GO:0006412">
    <property type="term" value="P:translation"/>
    <property type="evidence" value="ECO:0007669"/>
    <property type="project" value="UniProtKB-UniRule"/>
</dbReference>
<dbReference type="Gene3D" id="3.100.10.10">
    <property type="match status" value="1"/>
</dbReference>
<dbReference type="HAMAP" id="MF_01341">
    <property type="entry name" value="Ribosomal_uL15"/>
    <property type="match status" value="1"/>
</dbReference>
<dbReference type="InterPro" id="IPR030878">
    <property type="entry name" value="Ribosomal_uL15"/>
</dbReference>
<dbReference type="InterPro" id="IPR021131">
    <property type="entry name" value="Ribosomal_uL15/eL18"/>
</dbReference>
<dbReference type="InterPro" id="IPR036227">
    <property type="entry name" value="Ribosomal_uL15/eL18_sf"/>
</dbReference>
<dbReference type="InterPro" id="IPR005749">
    <property type="entry name" value="Ribosomal_uL15_bac-type"/>
</dbReference>
<dbReference type="NCBIfam" id="TIGR01071">
    <property type="entry name" value="rplO_bact"/>
    <property type="match status" value="1"/>
</dbReference>
<dbReference type="PANTHER" id="PTHR12934">
    <property type="entry name" value="50S RIBOSOMAL PROTEIN L15"/>
    <property type="match status" value="1"/>
</dbReference>
<dbReference type="PANTHER" id="PTHR12934:SF11">
    <property type="entry name" value="LARGE RIBOSOMAL SUBUNIT PROTEIN UL15M"/>
    <property type="match status" value="1"/>
</dbReference>
<dbReference type="Pfam" id="PF00828">
    <property type="entry name" value="Ribosomal_L27A"/>
    <property type="match status" value="1"/>
</dbReference>
<dbReference type="SUPFAM" id="SSF52080">
    <property type="entry name" value="Ribosomal proteins L15p and L18e"/>
    <property type="match status" value="1"/>
</dbReference>
<gene>
    <name evidence="1" type="primary">rplO</name>
    <name type="ordered locus">WD_0663</name>
</gene>